<evidence type="ECO:0000255" key="1">
    <source>
        <dbReference type="HAMAP-Rule" id="MF_00502"/>
    </source>
</evidence>
<evidence type="ECO:0000305" key="2"/>
<protein>
    <recommendedName>
        <fullName evidence="1">Large ribosomal subunit protein bL31B</fullName>
    </recommendedName>
    <alternativeName>
        <fullName evidence="2">50S ribosomal protein L31 type B</fullName>
    </alternativeName>
</protein>
<keyword id="KW-1185">Reference proteome</keyword>
<keyword id="KW-0687">Ribonucleoprotein</keyword>
<keyword id="KW-0689">Ribosomal protein</keyword>
<comment type="subunit">
    <text evidence="1">Part of the 50S ribosomal subunit.</text>
</comment>
<comment type="similarity">
    <text evidence="1">Belongs to the bacterial ribosomal protein bL31 family. Type B subfamily.</text>
</comment>
<sequence>MKSDIHPEYGYVVFKDLASSEMFLTRSVLKPEKQIEWNDGNHYPLFEVEISSASHPFYTGQQRILDSEGRVEKFYARYKKQSQ</sequence>
<dbReference type="EMBL" id="AE014184">
    <property type="protein sequence ID" value="AAO44411.1"/>
    <property type="molecule type" value="Genomic_DNA"/>
</dbReference>
<dbReference type="RefSeq" id="WP_011096406.1">
    <property type="nucleotide sequence ID" value="NC_004572.3"/>
</dbReference>
<dbReference type="SMR" id="Q83GH5"/>
<dbReference type="STRING" id="203267.TWT_314"/>
<dbReference type="KEGG" id="twh:TWT_314"/>
<dbReference type="eggNOG" id="COG0254">
    <property type="taxonomic scope" value="Bacteria"/>
</dbReference>
<dbReference type="HOGENOM" id="CLU_114306_2_2_11"/>
<dbReference type="OrthoDB" id="9803251at2"/>
<dbReference type="Proteomes" id="UP000002200">
    <property type="component" value="Chromosome"/>
</dbReference>
<dbReference type="GO" id="GO:1990904">
    <property type="term" value="C:ribonucleoprotein complex"/>
    <property type="evidence" value="ECO:0007669"/>
    <property type="project" value="UniProtKB-KW"/>
</dbReference>
<dbReference type="GO" id="GO:0005840">
    <property type="term" value="C:ribosome"/>
    <property type="evidence" value="ECO:0007669"/>
    <property type="project" value="UniProtKB-KW"/>
</dbReference>
<dbReference type="GO" id="GO:0003735">
    <property type="term" value="F:structural constituent of ribosome"/>
    <property type="evidence" value="ECO:0007669"/>
    <property type="project" value="InterPro"/>
</dbReference>
<dbReference type="GO" id="GO:0006412">
    <property type="term" value="P:translation"/>
    <property type="evidence" value="ECO:0007669"/>
    <property type="project" value="UniProtKB-UniRule"/>
</dbReference>
<dbReference type="Gene3D" id="4.10.830.30">
    <property type="entry name" value="Ribosomal protein L31"/>
    <property type="match status" value="1"/>
</dbReference>
<dbReference type="HAMAP" id="MF_00502">
    <property type="entry name" value="Ribosomal_bL31_2"/>
    <property type="match status" value="1"/>
</dbReference>
<dbReference type="InterPro" id="IPR034704">
    <property type="entry name" value="Ribosomal_bL28/bL31-like_sf"/>
</dbReference>
<dbReference type="InterPro" id="IPR002150">
    <property type="entry name" value="Ribosomal_bL31"/>
</dbReference>
<dbReference type="InterPro" id="IPR027493">
    <property type="entry name" value="Ribosomal_bL31_B"/>
</dbReference>
<dbReference type="InterPro" id="IPR042105">
    <property type="entry name" value="Ribosomal_bL31_sf"/>
</dbReference>
<dbReference type="NCBIfam" id="TIGR00105">
    <property type="entry name" value="L31"/>
    <property type="match status" value="1"/>
</dbReference>
<dbReference type="NCBIfam" id="NF002462">
    <property type="entry name" value="PRK01678.1"/>
    <property type="match status" value="1"/>
</dbReference>
<dbReference type="PANTHER" id="PTHR33280">
    <property type="entry name" value="50S RIBOSOMAL PROTEIN L31, CHLOROPLASTIC"/>
    <property type="match status" value="1"/>
</dbReference>
<dbReference type="PANTHER" id="PTHR33280:SF1">
    <property type="entry name" value="LARGE RIBOSOMAL SUBUNIT PROTEIN BL31C"/>
    <property type="match status" value="1"/>
</dbReference>
<dbReference type="Pfam" id="PF01197">
    <property type="entry name" value="Ribosomal_L31"/>
    <property type="match status" value="1"/>
</dbReference>
<dbReference type="PRINTS" id="PR01249">
    <property type="entry name" value="RIBOSOMALL31"/>
</dbReference>
<dbReference type="SUPFAM" id="SSF143800">
    <property type="entry name" value="L28p-like"/>
    <property type="match status" value="1"/>
</dbReference>
<dbReference type="PROSITE" id="PS01143">
    <property type="entry name" value="RIBOSOMAL_L31"/>
    <property type="match status" value="1"/>
</dbReference>
<feature type="chain" id="PRO_0000173279" description="Large ribosomal subunit protein bL31B">
    <location>
        <begin position="1"/>
        <end position="83"/>
    </location>
</feature>
<reference key="1">
    <citation type="journal article" date="2003" name="Genome Res.">
        <title>Tropheryma whipplei twist: a human pathogenic Actinobacteria with a reduced genome.</title>
        <authorList>
            <person name="Raoult D."/>
            <person name="Ogata H."/>
            <person name="Audic S."/>
            <person name="Robert C."/>
            <person name="Suhre K."/>
            <person name="Drancourt M."/>
            <person name="Claverie J.-M."/>
        </authorList>
    </citation>
    <scope>NUCLEOTIDE SEQUENCE [LARGE SCALE GENOMIC DNA]</scope>
    <source>
        <strain>Twist</strain>
    </source>
</reference>
<proteinExistence type="inferred from homology"/>
<gene>
    <name evidence="1" type="primary">rpmE2</name>
    <name type="synonym">rpmE</name>
    <name type="ordered locus">TWT_314</name>
</gene>
<name>RL31B_TROWT</name>
<organism>
    <name type="scientific">Tropheryma whipplei (strain Twist)</name>
    <name type="common">Whipple's bacillus</name>
    <dbReference type="NCBI Taxonomy" id="203267"/>
    <lineage>
        <taxon>Bacteria</taxon>
        <taxon>Bacillati</taxon>
        <taxon>Actinomycetota</taxon>
        <taxon>Actinomycetes</taxon>
        <taxon>Micrococcales</taxon>
        <taxon>Tropherymataceae</taxon>
        <taxon>Tropheryma</taxon>
    </lineage>
</organism>
<accession>Q83GH5</accession>